<accession>D4DB32</accession>
<organism>
    <name type="scientific">Trichophyton verrucosum (strain HKI 0517)</name>
    <dbReference type="NCBI Taxonomy" id="663202"/>
    <lineage>
        <taxon>Eukaryota</taxon>
        <taxon>Fungi</taxon>
        <taxon>Dikarya</taxon>
        <taxon>Ascomycota</taxon>
        <taxon>Pezizomycotina</taxon>
        <taxon>Eurotiomycetes</taxon>
        <taxon>Eurotiomycetidae</taxon>
        <taxon>Onygenales</taxon>
        <taxon>Arthrodermataceae</taxon>
        <taxon>Trichophyton</taxon>
    </lineage>
</organism>
<evidence type="ECO:0000250" key="1"/>
<evidence type="ECO:0000256" key="2">
    <source>
        <dbReference type="SAM" id="MobiDB-lite"/>
    </source>
</evidence>
<evidence type="ECO:0000305" key="3"/>
<proteinExistence type="inferred from homology"/>
<keyword id="KW-0539">Nucleus</keyword>
<keyword id="KW-0687">Ribonucleoprotein</keyword>
<keyword id="KW-0690">Ribosome biogenesis</keyword>
<keyword id="KW-0698">rRNA processing</keyword>
<dbReference type="EMBL" id="ACYE01000220">
    <property type="protein sequence ID" value="EFE40866.1"/>
    <property type="molecule type" value="Genomic_DNA"/>
</dbReference>
<dbReference type="RefSeq" id="XP_003021484.1">
    <property type="nucleotide sequence ID" value="XM_003021438.1"/>
</dbReference>
<dbReference type="GeneID" id="9578465"/>
<dbReference type="KEGG" id="tve:TRV_04331"/>
<dbReference type="HOGENOM" id="CLU_018705_0_1_1"/>
<dbReference type="OrthoDB" id="5596at34384"/>
<dbReference type="Proteomes" id="UP000008383">
    <property type="component" value="Unassembled WGS sequence"/>
</dbReference>
<dbReference type="GO" id="GO:0005730">
    <property type="term" value="C:nucleolus"/>
    <property type="evidence" value="ECO:0007669"/>
    <property type="project" value="UniProtKB-SubCell"/>
</dbReference>
<dbReference type="GO" id="GO:0032040">
    <property type="term" value="C:small-subunit processome"/>
    <property type="evidence" value="ECO:0007669"/>
    <property type="project" value="TreeGrafter"/>
</dbReference>
<dbReference type="GO" id="GO:0019843">
    <property type="term" value="F:rRNA binding"/>
    <property type="evidence" value="ECO:0007669"/>
    <property type="project" value="TreeGrafter"/>
</dbReference>
<dbReference type="GO" id="GO:0034511">
    <property type="term" value="F:U3 snoRNA binding"/>
    <property type="evidence" value="ECO:0007669"/>
    <property type="project" value="InterPro"/>
</dbReference>
<dbReference type="GO" id="GO:0000462">
    <property type="term" value="P:maturation of SSU-rRNA from tricistronic rRNA transcript (SSU-rRNA, 5.8S rRNA, LSU-rRNA)"/>
    <property type="evidence" value="ECO:0007669"/>
    <property type="project" value="TreeGrafter"/>
</dbReference>
<dbReference type="FunFam" id="3.40.50.300:FF:002356">
    <property type="entry name" value="U3 small nucleolar RNA-associated protein 25"/>
    <property type="match status" value="1"/>
</dbReference>
<dbReference type="Gene3D" id="3.40.50.300">
    <property type="entry name" value="P-loop containing nucleotide triphosphate hydrolases"/>
    <property type="match status" value="1"/>
</dbReference>
<dbReference type="InterPro" id="IPR027417">
    <property type="entry name" value="P-loop_NTPase"/>
</dbReference>
<dbReference type="InterPro" id="IPR010678">
    <property type="entry name" value="UTP25"/>
</dbReference>
<dbReference type="InterPro" id="IPR053939">
    <property type="entry name" value="UTP25_C"/>
</dbReference>
<dbReference type="InterPro" id="IPR053940">
    <property type="entry name" value="UTP25_NTPase-like"/>
</dbReference>
<dbReference type="PANTHER" id="PTHR12933">
    <property type="entry name" value="ORF PROTEIN-RELATED"/>
    <property type="match status" value="1"/>
</dbReference>
<dbReference type="PANTHER" id="PTHR12933:SF0">
    <property type="entry name" value="U3 SMALL NUCLEOLAR RNA-ASSOCIATED PROTEIN 25 HOMOLOG"/>
    <property type="match status" value="1"/>
</dbReference>
<dbReference type="Pfam" id="PF06862">
    <property type="entry name" value="Utp25_C"/>
    <property type="match status" value="1"/>
</dbReference>
<dbReference type="Pfam" id="PF22916">
    <property type="entry name" value="UTP25_NTPase-like"/>
    <property type="match status" value="1"/>
</dbReference>
<dbReference type="SUPFAM" id="SSF52540">
    <property type="entry name" value="P-loop containing nucleoside triphosphate hydrolases"/>
    <property type="match status" value="1"/>
</dbReference>
<feature type="chain" id="PRO_0000408142" description="U3 small nucleolar RNA-associated protein 25">
    <location>
        <begin position="1"/>
        <end position="714"/>
    </location>
</feature>
<feature type="region of interest" description="Disordered" evidence="2">
    <location>
        <begin position="1"/>
        <end position="145"/>
    </location>
</feature>
<feature type="compositionally biased region" description="Basic residues" evidence="2">
    <location>
        <begin position="1"/>
        <end position="23"/>
    </location>
</feature>
<feature type="compositionally biased region" description="Basic and acidic residues" evidence="2">
    <location>
        <begin position="24"/>
        <end position="38"/>
    </location>
</feature>
<feature type="compositionally biased region" description="Acidic residues" evidence="2">
    <location>
        <begin position="118"/>
        <end position="145"/>
    </location>
</feature>
<sequence length="714" mass="80537">MAIQHKKGGGHRGRGSKTGRSRGRKFETSRLKDVREDESSGGEEDVDGQPTEDMNDSEGTDVSSESGLDEPPKENSYSTLLKLLNTDAKSNEPARKKRKIKANEPDANPVEVSIPTADDTEQMDEVADTEASASEDENMDDEDIPDEDYAEDIGTDGRNDMFELHFGNPDETELSHKIQACSKAWKSTKADLIDGLYSVVSMPDAGGISSASLPTTPSPADLKLKQKLARNAVSFDRLNSCLTPYIFGYHDTLFCSRTTQNSAKLRDLYCLHALNHVLKTRDRVIKNSAILSRENNGDVELRDQGFTRPKVLIILPTRQACVRVINSFTKIYPMEQQENKKRFMDSFSAADSDEWAHKPDDFKELFGGNDDDMFRLGFKFTRKSLKFFSKFYSSDIILASPLGLRTAIEKEGGKKNENDFLSSIEMVIVDHADALMMQNWDHVEYIFSNLNLQPKEAHGCDFSRVRQWYLDGHGKFLRQTLVFSAFNTPELNALYNTQMQNVFGKAKIMSKYEGAMLNLRLPISVKQTFSRFDSASPLKDPEARFQYFTRTVLASLARGWTESSPRKKSGGTLIFIPSYLDFVRVRNHFANSSQTENISFGLISEYTSVRDSSRARSHFMNGRHSVLLYTERAHHFRRYNIRGVTNIVMYGLPDNPIFWGDLIEYLGSAAGGTSTPTVRVLFSKWDALKLERIVGTARVRSMLLEKGGDTFTFV</sequence>
<gene>
    <name type="primary">UTP25</name>
    <name type="ORF">TRV_04331</name>
</gene>
<name>UTP25_TRIVH</name>
<comment type="function">
    <text evidence="1">DEAD-box RNA helicase-like protein required for pre-18S rRNA processing, specifically at sites A0, A1, and A2.</text>
</comment>
<comment type="subunit">
    <text evidence="1">Component of the ribosomal small subunit (SSU) processome composed of at least 40 protein subunits and snoRNA U3.</text>
</comment>
<comment type="subcellular location">
    <subcellularLocation>
        <location evidence="1">Nucleus</location>
        <location evidence="1">Nucleolus</location>
    </subcellularLocation>
</comment>
<comment type="similarity">
    <text evidence="3">Belongs to the UTP25 family.</text>
</comment>
<reference key="1">
    <citation type="journal article" date="2011" name="Genome Biol.">
        <title>Comparative and functional genomics provide insights into the pathogenicity of dermatophytic fungi.</title>
        <authorList>
            <person name="Burmester A."/>
            <person name="Shelest E."/>
            <person name="Gloeckner G."/>
            <person name="Heddergott C."/>
            <person name="Schindler S."/>
            <person name="Staib P."/>
            <person name="Heidel A."/>
            <person name="Felder M."/>
            <person name="Petzold A."/>
            <person name="Szafranski K."/>
            <person name="Feuermann M."/>
            <person name="Pedruzzi I."/>
            <person name="Priebe S."/>
            <person name="Groth M."/>
            <person name="Winkler R."/>
            <person name="Li W."/>
            <person name="Kniemeyer O."/>
            <person name="Schroeckh V."/>
            <person name="Hertweck C."/>
            <person name="Hube B."/>
            <person name="White T.C."/>
            <person name="Platzer M."/>
            <person name="Guthke R."/>
            <person name="Heitman J."/>
            <person name="Woestemeyer J."/>
            <person name="Zipfel P.F."/>
            <person name="Monod M."/>
            <person name="Brakhage A.A."/>
        </authorList>
    </citation>
    <scope>NUCLEOTIDE SEQUENCE [LARGE SCALE GENOMIC DNA]</scope>
    <source>
        <strain>HKI 0517</strain>
    </source>
</reference>
<protein>
    <recommendedName>
        <fullName>U3 small nucleolar RNA-associated protein 25</fullName>
        <shortName>U3 snoRNA-associated protein 25</shortName>
    </recommendedName>
    <alternativeName>
        <fullName>U three protein 25</fullName>
    </alternativeName>
</protein>